<accession>Q9HH80</accession>
<accession>Q7LWX7</accession>
<name>RL18_PYRFU</name>
<sequence>MAHGPRYRVPFRRRREGKTNYRKRLKLLKSGKPRLVVRKSLNHHIAQIIVYDPKGDRTLVSAHTRELIRDFGWKGHCGNTPSAYLLGLLIGYKAKQAGIEEAILDIGLHPPVRGSSVFAVLKGAVDAGLNVPHSPEIFPDEYRIRGEHIAEYAKMLKEQDEEKFRRQFGGYLVKGLDPEKLPEHFEEVKARIIEKFEGEGARE</sequence>
<protein>
    <recommendedName>
        <fullName evidence="1">Large ribosomal subunit protein uL18</fullName>
    </recommendedName>
    <alternativeName>
        <fullName>50S ribosomal protein L18</fullName>
    </alternativeName>
    <alternativeName>
        <fullName>PfL18</fullName>
    </alternativeName>
</protein>
<dbReference type="EMBL" id="AB040118">
    <property type="protein sequence ID" value="BAB13703.1"/>
    <property type="molecule type" value="Genomic_DNA"/>
</dbReference>
<dbReference type="EMBL" id="AE009950">
    <property type="protein sequence ID" value="AAL81929.1"/>
    <property type="molecule type" value="Genomic_DNA"/>
</dbReference>
<dbReference type="RefSeq" id="WP_011012946.1">
    <property type="nucleotide sequence ID" value="NZ_CP023154.1"/>
</dbReference>
<dbReference type="PDB" id="4V6U">
    <property type="method" value="EM"/>
    <property type="resolution" value="6.60 A"/>
    <property type="chains" value="BO=1-203"/>
</dbReference>
<dbReference type="PDBsum" id="4V6U"/>
<dbReference type="SMR" id="Q9HH80"/>
<dbReference type="STRING" id="186497.PF1805"/>
<dbReference type="PaxDb" id="186497-PF1805"/>
<dbReference type="KEGG" id="pfu:PF1805"/>
<dbReference type="PATRIC" id="fig|186497.12.peg.1876"/>
<dbReference type="eggNOG" id="arCOG04088">
    <property type="taxonomic scope" value="Archaea"/>
</dbReference>
<dbReference type="HOGENOM" id="CLU_056222_2_0_2"/>
<dbReference type="OrthoDB" id="8644at2157"/>
<dbReference type="PhylomeDB" id="Q9HH80"/>
<dbReference type="Proteomes" id="UP000001013">
    <property type="component" value="Chromosome"/>
</dbReference>
<dbReference type="GO" id="GO:0022625">
    <property type="term" value="C:cytosolic large ribosomal subunit"/>
    <property type="evidence" value="ECO:0007669"/>
    <property type="project" value="TreeGrafter"/>
</dbReference>
<dbReference type="GO" id="GO:0008097">
    <property type="term" value="F:5S rRNA binding"/>
    <property type="evidence" value="ECO:0007669"/>
    <property type="project" value="InterPro"/>
</dbReference>
<dbReference type="GO" id="GO:0003735">
    <property type="term" value="F:structural constituent of ribosome"/>
    <property type="evidence" value="ECO:0007669"/>
    <property type="project" value="InterPro"/>
</dbReference>
<dbReference type="GO" id="GO:0000027">
    <property type="term" value="P:ribosomal large subunit assembly"/>
    <property type="evidence" value="ECO:0007669"/>
    <property type="project" value="TreeGrafter"/>
</dbReference>
<dbReference type="GO" id="GO:0006412">
    <property type="term" value="P:translation"/>
    <property type="evidence" value="ECO:0007669"/>
    <property type="project" value="UniProtKB-UniRule"/>
</dbReference>
<dbReference type="CDD" id="cd00432">
    <property type="entry name" value="Ribosomal_L18_L5e"/>
    <property type="match status" value="1"/>
</dbReference>
<dbReference type="FunFam" id="3.30.420.100:FF:000008">
    <property type="entry name" value="50S ribosomal protein L18"/>
    <property type="match status" value="1"/>
</dbReference>
<dbReference type="Gene3D" id="3.30.420.100">
    <property type="match status" value="1"/>
</dbReference>
<dbReference type="HAMAP" id="MF_01337_A">
    <property type="entry name" value="Ribosomal_uL18_A"/>
    <property type="match status" value="1"/>
</dbReference>
<dbReference type="InterPro" id="IPR005485">
    <property type="entry name" value="Rbsml_uL18_euk"/>
</dbReference>
<dbReference type="NCBIfam" id="NF006342">
    <property type="entry name" value="PRK08569.1"/>
    <property type="match status" value="1"/>
</dbReference>
<dbReference type="PANTHER" id="PTHR23410:SF12">
    <property type="entry name" value="LARGE RIBOSOMAL SUBUNIT PROTEIN UL18"/>
    <property type="match status" value="1"/>
</dbReference>
<dbReference type="PANTHER" id="PTHR23410">
    <property type="entry name" value="RIBOSOMAL PROTEIN L5-RELATED"/>
    <property type="match status" value="1"/>
</dbReference>
<dbReference type="Pfam" id="PF17144">
    <property type="entry name" value="Ribosomal_L5e"/>
    <property type="match status" value="2"/>
</dbReference>
<dbReference type="PRINTS" id="PR00058">
    <property type="entry name" value="RIBOSOMALL5"/>
</dbReference>
<dbReference type="SUPFAM" id="SSF53137">
    <property type="entry name" value="Translational machinery components"/>
    <property type="match status" value="1"/>
</dbReference>
<keyword id="KW-0002">3D-structure</keyword>
<keyword id="KW-1185">Reference proteome</keyword>
<keyword id="KW-0687">Ribonucleoprotein</keyword>
<keyword id="KW-0689">Ribosomal protein</keyword>
<keyword id="KW-0694">RNA-binding</keyword>
<keyword id="KW-0699">rRNA-binding</keyword>
<feature type="chain" id="PRO_0000131414" description="Large ribosomal subunit protein uL18">
    <location>
        <begin position="1"/>
        <end position="203"/>
    </location>
</feature>
<feature type="mutagenesis site" description="6-fold decrease in binding to 5S rRNA." evidence="2">
    <location>
        <begin position="1"/>
        <end position="15"/>
    </location>
</feature>
<reference key="1">
    <citation type="journal article" date="2000" name="FEBS Lett.">
        <title>5S rRNA binding proteins from the hyperthermophilic archaeon, Pyrococcus furiosus.</title>
        <authorList>
            <person name="Furumoto H."/>
            <person name="Taguchi A."/>
            <person name="Itoh T."/>
            <person name="Morinaga T."/>
            <person name="Itoh T."/>
        </authorList>
    </citation>
    <scope>NUCLEOTIDE SEQUENCE [GENOMIC DNA]</scope>
    <scope>MUTAGENESIS</scope>
    <source>
        <strain>ATCC 43587 / DSM 3638 / JCM 8422 / Vc1</strain>
    </source>
</reference>
<reference key="2">
    <citation type="journal article" date="1999" name="Genetics">
        <title>Divergence of the hyperthermophilic archaea Pyrococcus furiosus and P. horikoshii inferred from complete genomic sequences.</title>
        <authorList>
            <person name="Maeder D.L."/>
            <person name="Weiss R.B."/>
            <person name="Dunn D.M."/>
            <person name="Cherry J.L."/>
            <person name="Gonzalez J.M."/>
            <person name="DiRuggiero J."/>
            <person name="Robb F.T."/>
        </authorList>
    </citation>
    <scope>NUCLEOTIDE SEQUENCE [LARGE SCALE GENOMIC DNA]</scope>
    <source>
        <strain>ATCC 43587 / DSM 3638 / JCM 8422 / Vc1</strain>
    </source>
</reference>
<reference evidence="4" key="3">
    <citation type="journal article" date="2013" name="Nucleic Acids Res.">
        <title>Promiscuous behaviour of archaeal ribosomal proteins: implications for eukaryotic ribosome evolution.</title>
        <authorList>
            <person name="Armache J.P."/>
            <person name="Anger A.M."/>
            <person name="Marquez V."/>
            <person name="Franckenberg S."/>
            <person name="Frohlich T."/>
            <person name="Villa E."/>
            <person name="Berninghausen O."/>
            <person name="Thomm M."/>
            <person name="Arnold G.J."/>
            <person name="Beckmann R."/>
            <person name="Wilson D.N."/>
        </authorList>
    </citation>
    <scope>STRUCTURE BY ELECTRON MICROSCOPY (6.60 ANGSTROMS) IN THE 70S RIBOSOME</scope>
    <scope>SUBUNIT</scope>
</reference>
<organism>
    <name type="scientific">Pyrococcus furiosus (strain ATCC 43587 / DSM 3638 / JCM 8422 / Vc1)</name>
    <dbReference type="NCBI Taxonomy" id="186497"/>
    <lineage>
        <taxon>Archaea</taxon>
        <taxon>Methanobacteriati</taxon>
        <taxon>Methanobacteriota</taxon>
        <taxon>Thermococci</taxon>
        <taxon>Thermococcales</taxon>
        <taxon>Thermococcaceae</taxon>
        <taxon>Pyrococcus</taxon>
    </lineage>
</organism>
<comment type="function">
    <text evidence="1">This is one of the proteins that bind and probably mediate the attachment of the 5S RNA into the large ribosomal subunit, where it forms part of the central protuberance.</text>
</comment>
<comment type="subunit">
    <text evidence="1 3">Part of the 50S ribosomal subunit (PubMed:23222135). Contacts the 5S and 23S rRNAs.</text>
</comment>
<comment type="similarity">
    <text evidence="1">Belongs to the universal ribosomal protein uL18 family.</text>
</comment>
<proteinExistence type="evidence at protein level"/>
<gene>
    <name evidence="1" type="primary">rpl18</name>
    <name type="ordered locus">PF1805</name>
</gene>
<evidence type="ECO:0000255" key="1">
    <source>
        <dbReference type="HAMAP-Rule" id="MF_01337"/>
    </source>
</evidence>
<evidence type="ECO:0000269" key="2">
    <source>
    </source>
</evidence>
<evidence type="ECO:0000269" key="3">
    <source>
    </source>
</evidence>
<evidence type="ECO:0007744" key="4">
    <source>
        <dbReference type="PDB" id="4V6U"/>
    </source>
</evidence>